<sequence>MPIITLPDGSQRSFDHPVSVAEVAQSIGAGLAKATLAGKVDGRLVDACDTIDRDATLQIITPKDEEGLEIIRHSCAHLVGHAVKQLYPTAKMVIGPVIEEGFYYDIFFERPFTPEDMAAIQQRMRELIDKDYDVIKKMTPRAEVIELFKSRGEDYKLRLIDDMPDEKAMGLYFHEEYVDMCRGPHVPNTRFLKAFQLTKISGAYWRGDSKNEQLQRIYGTAWADKKQLAAYIQRIEEAEKRDHRRIGKQLDLFHLQEEAPGMVFWHPNGWSVYQVLEQYMRKVQRDHGYVEVRTPQVVDRILWERSGHWSNYAENMFTTSSESRDYAVKPMNCPCHVQIFNQGLKSYRDLPLRLAEFGACHRNEPSGALHGIMRVRGFTQDDAHIFCTEEQVKKEAADFIKLTLQVYRDFGFTDIAMKLSTRPAKRVGSDELWDRAEGALADALNESGLAWEYQPGEGAFYGPKIEFTLKDCLGRNWQCGTLQYDPNLPERLDASYIAEDNNRKRPVMLHRAILGSFERFIGMLIEHYAGAFPAWLAPTQAVVMNITDKQADFAAEVVRILGESGFRAKSDLRNEKIGFKIREHTLLKVPYLLVIGDREVESKAVAVRTREGEDLGSMPVTQFAELLAQAVSRRGRQDSE</sequence>
<gene>
    <name evidence="1" type="primary">thrS</name>
    <name type="ordered locus">PA14_28650</name>
</gene>
<dbReference type="EC" id="6.1.1.3" evidence="1"/>
<dbReference type="EMBL" id="CP000438">
    <property type="protein sequence ID" value="ABJ11970.1"/>
    <property type="molecule type" value="Genomic_DNA"/>
</dbReference>
<dbReference type="RefSeq" id="WP_003090677.1">
    <property type="nucleotide sequence ID" value="NZ_CP034244.1"/>
</dbReference>
<dbReference type="SMR" id="Q02NP1"/>
<dbReference type="KEGG" id="pau:PA14_28650"/>
<dbReference type="PseudoCAP" id="PA14_28650"/>
<dbReference type="HOGENOM" id="CLU_008554_0_1_6"/>
<dbReference type="BioCyc" id="PAER208963:G1G74-2396-MONOMER"/>
<dbReference type="Proteomes" id="UP000000653">
    <property type="component" value="Chromosome"/>
</dbReference>
<dbReference type="GO" id="GO:0005829">
    <property type="term" value="C:cytosol"/>
    <property type="evidence" value="ECO:0007669"/>
    <property type="project" value="TreeGrafter"/>
</dbReference>
<dbReference type="GO" id="GO:0005524">
    <property type="term" value="F:ATP binding"/>
    <property type="evidence" value="ECO:0007669"/>
    <property type="project" value="UniProtKB-UniRule"/>
</dbReference>
<dbReference type="GO" id="GO:0046872">
    <property type="term" value="F:metal ion binding"/>
    <property type="evidence" value="ECO:0007669"/>
    <property type="project" value="UniProtKB-KW"/>
</dbReference>
<dbReference type="GO" id="GO:0004829">
    <property type="term" value="F:threonine-tRNA ligase activity"/>
    <property type="evidence" value="ECO:0007669"/>
    <property type="project" value="UniProtKB-UniRule"/>
</dbReference>
<dbReference type="GO" id="GO:0000049">
    <property type="term" value="F:tRNA binding"/>
    <property type="evidence" value="ECO:0007669"/>
    <property type="project" value="UniProtKB-KW"/>
</dbReference>
<dbReference type="GO" id="GO:0006435">
    <property type="term" value="P:threonyl-tRNA aminoacylation"/>
    <property type="evidence" value="ECO:0007669"/>
    <property type="project" value="UniProtKB-UniRule"/>
</dbReference>
<dbReference type="CDD" id="cd01667">
    <property type="entry name" value="TGS_ThrRS"/>
    <property type="match status" value="1"/>
</dbReference>
<dbReference type="CDD" id="cd00860">
    <property type="entry name" value="ThrRS_anticodon"/>
    <property type="match status" value="1"/>
</dbReference>
<dbReference type="CDD" id="cd00771">
    <property type="entry name" value="ThrRS_core"/>
    <property type="match status" value="1"/>
</dbReference>
<dbReference type="FunFam" id="3.10.20.30:FF:000005">
    <property type="entry name" value="Threonine--tRNA ligase"/>
    <property type="match status" value="1"/>
</dbReference>
<dbReference type="FunFam" id="3.30.54.20:FF:000002">
    <property type="entry name" value="Threonine--tRNA ligase"/>
    <property type="match status" value="1"/>
</dbReference>
<dbReference type="FunFam" id="3.30.930.10:FF:000002">
    <property type="entry name" value="Threonine--tRNA ligase"/>
    <property type="match status" value="1"/>
</dbReference>
<dbReference type="FunFam" id="3.40.50.800:FF:000001">
    <property type="entry name" value="Threonine--tRNA ligase"/>
    <property type="match status" value="1"/>
</dbReference>
<dbReference type="FunFam" id="3.30.980.10:FF:000005">
    <property type="entry name" value="Threonyl-tRNA synthetase, mitochondrial"/>
    <property type="match status" value="1"/>
</dbReference>
<dbReference type="Gene3D" id="3.10.20.30">
    <property type="match status" value="1"/>
</dbReference>
<dbReference type="Gene3D" id="3.30.54.20">
    <property type="match status" value="1"/>
</dbReference>
<dbReference type="Gene3D" id="3.40.50.800">
    <property type="entry name" value="Anticodon-binding domain"/>
    <property type="match status" value="1"/>
</dbReference>
<dbReference type="Gene3D" id="3.30.930.10">
    <property type="entry name" value="Bira Bifunctional Protein, Domain 2"/>
    <property type="match status" value="1"/>
</dbReference>
<dbReference type="Gene3D" id="3.30.980.10">
    <property type="entry name" value="Threonyl-trna Synthetase, Chain A, domain 2"/>
    <property type="match status" value="1"/>
</dbReference>
<dbReference type="HAMAP" id="MF_00184">
    <property type="entry name" value="Thr_tRNA_synth"/>
    <property type="match status" value="1"/>
</dbReference>
<dbReference type="InterPro" id="IPR002314">
    <property type="entry name" value="aa-tRNA-synt_IIb"/>
</dbReference>
<dbReference type="InterPro" id="IPR006195">
    <property type="entry name" value="aa-tRNA-synth_II"/>
</dbReference>
<dbReference type="InterPro" id="IPR045864">
    <property type="entry name" value="aa-tRNA-synth_II/BPL/LPL"/>
</dbReference>
<dbReference type="InterPro" id="IPR004154">
    <property type="entry name" value="Anticodon-bd"/>
</dbReference>
<dbReference type="InterPro" id="IPR036621">
    <property type="entry name" value="Anticodon-bd_dom_sf"/>
</dbReference>
<dbReference type="InterPro" id="IPR012675">
    <property type="entry name" value="Beta-grasp_dom_sf"/>
</dbReference>
<dbReference type="InterPro" id="IPR004095">
    <property type="entry name" value="TGS"/>
</dbReference>
<dbReference type="InterPro" id="IPR012676">
    <property type="entry name" value="TGS-like"/>
</dbReference>
<dbReference type="InterPro" id="IPR002320">
    <property type="entry name" value="Thr-tRNA-ligase_IIa"/>
</dbReference>
<dbReference type="InterPro" id="IPR018163">
    <property type="entry name" value="Thr/Ala-tRNA-synth_IIc_edit"/>
</dbReference>
<dbReference type="InterPro" id="IPR047246">
    <property type="entry name" value="ThrRS_anticodon"/>
</dbReference>
<dbReference type="InterPro" id="IPR033728">
    <property type="entry name" value="ThrRS_core"/>
</dbReference>
<dbReference type="InterPro" id="IPR012947">
    <property type="entry name" value="tRNA_SAD"/>
</dbReference>
<dbReference type="NCBIfam" id="TIGR00418">
    <property type="entry name" value="thrS"/>
    <property type="match status" value="1"/>
</dbReference>
<dbReference type="PANTHER" id="PTHR11451:SF44">
    <property type="entry name" value="THREONINE--TRNA LIGASE, CHLOROPLASTIC_MITOCHONDRIAL 2"/>
    <property type="match status" value="1"/>
</dbReference>
<dbReference type="PANTHER" id="PTHR11451">
    <property type="entry name" value="THREONINE-TRNA LIGASE"/>
    <property type="match status" value="1"/>
</dbReference>
<dbReference type="Pfam" id="PF03129">
    <property type="entry name" value="HGTP_anticodon"/>
    <property type="match status" value="1"/>
</dbReference>
<dbReference type="Pfam" id="PF02824">
    <property type="entry name" value="TGS"/>
    <property type="match status" value="1"/>
</dbReference>
<dbReference type="Pfam" id="PF00587">
    <property type="entry name" value="tRNA-synt_2b"/>
    <property type="match status" value="1"/>
</dbReference>
<dbReference type="Pfam" id="PF07973">
    <property type="entry name" value="tRNA_SAD"/>
    <property type="match status" value="1"/>
</dbReference>
<dbReference type="PRINTS" id="PR01047">
    <property type="entry name" value="TRNASYNTHTHR"/>
</dbReference>
<dbReference type="SMART" id="SM00863">
    <property type="entry name" value="tRNA_SAD"/>
    <property type="match status" value="1"/>
</dbReference>
<dbReference type="SUPFAM" id="SSF52954">
    <property type="entry name" value="Class II aaRS ABD-related"/>
    <property type="match status" value="1"/>
</dbReference>
<dbReference type="SUPFAM" id="SSF55681">
    <property type="entry name" value="Class II aaRS and biotin synthetases"/>
    <property type="match status" value="1"/>
</dbReference>
<dbReference type="SUPFAM" id="SSF81271">
    <property type="entry name" value="TGS-like"/>
    <property type="match status" value="1"/>
</dbReference>
<dbReference type="SUPFAM" id="SSF55186">
    <property type="entry name" value="ThrRS/AlaRS common domain"/>
    <property type="match status" value="1"/>
</dbReference>
<dbReference type="PROSITE" id="PS50862">
    <property type="entry name" value="AA_TRNA_LIGASE_II"/>
    <property type="match status" value="1"/>
</dbReference>
<dbReference type="PROSITE" id="PS51880">
    <property type="entry name" value="TGS"/>
    <property type="match status" value="1"/>
</dbReference>
<feature type="chain" id="PRO_1000020471" description="Threonine--tRNA ligase">
    <location>
        <begin position="1"/>
        <end position="640"/>
    </location>
</feature>
<feature type="domain" description="TGS" evidence="2">
    <location>
        <begin position="1"/>
        <end position="61"/>
    </location>
</feature>
<feature type="region of interest" description="Catalytic" evidence="1">
    <location>
        <begin position="242"/>
        <end position="533"/>
    </location>
</feature>
<feature type="binding site" evidence="1">
    <location>
        <position position="333"/>
    </location>
    <ligand>
        <name>Zn(2+)</name>
        <dbReference type="ChEBI" id="CHEBI:29105"/>
    </ligand>
</feature>
<feature type="binding site" evidence="1">
    <location>
        <position position="384"/>
    </location>
    <ligand>
        <name>Zn(2+)</name>
        <dbReference type="ChEBI" id="CHEBI:29105"/>
    </ligand>
</feature>
<feature type="binding site" evidence="1">
    <location>
        <position position="510"/>
    </location>
    <ligand>
        <name>Zn(2+)</name>
        <dbReference type="ChEBI" id="CHEBI:29105"/>
    </ligand>
</feature>
<evidence type="ECO:0000255" key="1">
    <source>
        <dbReference type="HAMAP-Rule" id="MF_00184"/>
    </source>
</evidence>
<evidence type="ECO:0000255" key="2">
    <source>
        <dbReference type="PROSITE-ProRule" id="PRU01228"/>
    </source>
</evidence>
<organism>
    <name type="scientific">Pseudomonas aeruginosa (strain UCBPP-PA14)</name>
    <dbReference type="NCBI Taxonomy" id="208963"/>
    <lineage>
        <taxon>Bacteria</taxon>
        <taxon>Pseudomonadati</taxon>
        <taxon>Pseudomonadota</taxon>
        <taxon>Gammaproteobacteria</taxon>
        <taxon>Pseudomonadales</taxon>
        <taxon>Pseudomonadaceae</taxon>
        <taxon>Pseudomonas</taxon>
    </lineage>
</organism>
<keyword id="KW-0030">Aminoacyl-tRNA synthetase</keyword>
<keyword id="KW-0067">ATP-binding</keyword>
<keyword id="KW-0963">Cytoplasm</keyword>
<keyword id="KW-0436">Ligase</keyword>
<keyword id="KW-0479">Metal-binding</keyword>
<keyword id="KW-0547">Nucleotide-binding</keyword>
<keyword id="KW-0648">Protein biosynthesis</keyword>
<keyword id="KW-0694">RNA-binding</keyword>
<keyword id="KW-0820">tRNA-binding</keyword>
<keyword id="KW-0862">Zinc</keyword>
<name>SYT_PSEAB</name>
<proteinExistence type="inferred from homology"/>
<comment type="function">
    <text evidence="1">Catalyzes the attachment of threonine to tRNA(Thr) in a two-step reaction: L-threonine is first activated by ATP to form Thr-AMP and then transferred to the acceptor end of tRNA(Thr). Also edits incorrectly charged L-seryl-tRNA(Thr).</text>
</comment>
<comment type="catalytic activity">
    <reaction evidence="1">
        <text>tRNA(Thr) + L-threonine + ATP = L-threonyl-tRNA(Thr) + AMP + diphosphate + H(+)</text>
        <dbReference type="Rhea" id="RHEA:24624"/>
        <dbReference type="Rhea" id="RHEA-COMP:9670"/>
        <dbReference type="Rhea" id="RHEA-COMP:9704"/>
        <dbReference type="ChEBI" id="CHEBI:15378"/>
        <dbReference type="ChEBI" id="CHEBI:30616"/>
        <dbReference type="ChEBI" id="CHEBI:33019"/>
        <dbReference type="ChEBI" id="CHEBI:57926"/>
        <dbReference type="ChEBI" id="CHEBI:78442"/>
        <dbReference type="ChEBI" id="CHEBI:78534"/>
        <dbReference type="ChEBI" id="CHEBI:456215"/>
        <dbReference type="EC" id="6.1.1.3"/>
    </reaction>
</comment>
<comment type="cofactor">
    <cofactor evidence="1">
        <name>Zn(2+)</name>
        <dbReference type="ChEBI" id="CHEBI:29105"/>
    </cofactor>
    <text evidence="1">Binds 1 zinc ion per subunit.</text>
</comment>
<comment type="subunit">
    <text evidence="1">Homodimer.</text>
</comment>
<comment type="subcellular location">
    <subcellularLocation>
        <location evidence="1">Cytoplasm</location>
    </subcellularLocation>
</comment>
<comment type="similarity">
    <text evidence="1">Belongs to the class-II aminoacyl-tRNA synthetase family.</text>
</comment>
<protein>
    <recommendedName>
        <fullName evidence="1">Threonine--tRNA ligase</fullName>
        <ecNumber evidence="1">6.1.1.3</ecNumber>
    </recommendedName>
    <alternativeName>
        <fullName evidence="1">Threonyl-tRNA synthetase</fullName>
        <shortName evidence="1">ThrRS</shortName>
    </alternativeName>
</protein>
<reference key="1">
    <citation type="journal article" date="2006" name="Genome Biol.">
        <title>Genomic analysis reveals that Pseudomonas aeruginosa virulence is combinatorial.</title>
        <authorList>
            <person name="Lee D.G."/>
            <person name="Urbach J.M."/>
            <person name="Wu G."/>
            <person name="Liberati N.T."/>
            <person name="Feinbaum R.L."/>
            <person name="Miyata S."/>
            <person name="Diggins L.T."/>
            <person name="He J."/>
            <person name="Saucier M."/>
            <person name="Deziel E."/>
            <person name="Friedman L."/>
            <person name="Li L."/>
            <person name="Grills G."/>
            <person name="Montgomery K."/>
            <person name="Kucherlapati R."/>
            <person name="Rahme L.G."/>
            <person name="Ausubel F.M."/>
        </authorList>
    </citation>
    <scope>NUCLEOTIDE SEQUENCE [LARGE SCALE GENOMIC DNA]</scope>
    <source>
        <strain>UCBPP-PA14</strain>
    </source>
</reference>
<accession>Q02NP1</accession>